<name>ENGB_PYRHO</name>
<keyword id="KW-0002">3D-structure</keyword>
<keyword id="KW-0131">Cell cycle</keyword>
<keyword id="KW-0132">Cell division</keyword>
<keyword id="KW-0342">GTP-binding</keyword>
<keyword id="KW-0460">Magnesium</keyword>
<keyword id="KW-0479">Metal-binding</keyword>
<keyword id="KW-0547">Nucleotide-binding</keyword>
<keyword id="KW-0717">Septation</keyword>
<dbReference type="EMBL" id="BA000001">
    <property type="protein sequence ID" value="BAA29269.1"/>
    <property type="status" value="ALT_FRAME"/>
    <property type="molecule type" value="Genomic_DNA"/>
</dbReference>
<dbReference type="PIR" id="F71242">
    <property type="entry name" value="F71242"/>
</dbReference>
<dbReference type="RefSeq" id="WP_010884308.1">
    <property type="nucleotide sequence ID" value="NC_000961.1"/>
</dbReference>
<dbReference type="PDB" id="2CXX">
    <property type="method" value="X-ray"/>
    <property type="resolution" value="1.70 A"/>
    <property type="chains" value="A/B/C=27-216"/>
</dbReference>
<dbReference type="PDBsum" id="2CXX"/>
<dbReference type="SMR" id="O57939"/>
<dbReference type="STRING" id="70601.gene:9377110"/>
<dbReference type="EnsemblBacteria" id="BAA29269">
    <property type="protein sequence ID" value="BAA29269"/>
    <property type="gene ID" value="BAA29269"/>
</dbReference>
<dbReference type="GeneID" id="1444090"/>
<dbReference type="KEGG" id="pho:PH0200"/>
<dbReference type="eggNOG" id="arCOG00355">
    <property type="taxonomic scope" value="Archaea"/>
</dbReference>
<dbReference type="OrthoDB" id="65113at2157"/>
<dbReference type="EvolutionaryTrace" id="O57939"/>
<dbReference type="Proteomes" id="UP000000752">
    <property type="component" value="Chromosome"/>
</dbReference>
<dbReference type="GO" id="GO:0005525">
    <property type="term" value="F:GTP binding"/>
    <property type="evidence" value="ECO:0007669"/>
    <property type="project" value="UniProtKB-UniRule"/>
</dbReference>
<dbReference type="GO" id="GO:0046872">
    <property type="term" value="F:metal ion binding"/>
    <property type="evidence" value="ECO:0007669"/>
    <property type="project" value="UniProtKB-KW"/>
</dbReference>
<dbReference type="GO" id="GO:0051301">
    <property type="term" value="P:cell division"/>
    <property type="evidence" value="ECO:0007669"/>
    <property type="project" value="UniProtKB-KW"/>
</dbReference>
<dbReference type="CDD" id="cd01876">
    <property type="entry name" value="YihA_EngB"/>
    <property type="match status" value="1"/>
</dbReference>
<dbReference type="Gene3D" id="3.40.50.300">
    <property type="entry name" value="P-loop containing nucleotide triphosphate hydrolases"/>
    <property type="match status" value="1"/>
</dbReference>
<dbReference type="HAMAP" id="MF_00321">
    <property type="entry name" value="GTPase_EngB"/>
    <property type="match status" value="1"/>
</dbReference>
<dbReference type="InterPro" id="IPR030393">
    <property type="entry name" value="G_ENGB_dom"/>
</dbReference>
<dbReference type="InterPro" id="IPR006073">
    <property type="entry name" value="GTP-bd"/>
</dbReference>
<dbReference type="InterPro" id="IPR019987">
    <property type="entry name" value="GTP-bd_ribosome_bio_YsxC"/>
</dbReference>
<dbReference type="InterPro" id="IPR027417">
    <property type="entry name" value="P-loop_NTPase"/>
</dbReference>
<dbReference type="InterPro" id="IPR005225">
    <property type="entry name" value="Small_GTP-bd"/>
</dbReference>
<dbReference type="NCBIfam" id="NF003255">
    <property type="entry name" value="PRK04213.1"/>
    <property type="match status" value="1"/>
</dbReference>
<dbReference type="NCBIfam" id="TIGR00231">
    <property type="entry name" value="small_GTP"/>
    <property type="match status" value="1"/>
</dbReference>
<dbReference type="PANTHER" id="PTHR11649:SF13">
    <property type="entry name" value="ENGB-TYPE G DOMAIN-CONTAINING PROTEIN"/>
    <property type="match status" value="1"/>
</dbReference>
<dbReference type="PANTHER" id="PTHR11649">
    <property type="entry name" value="MSS1/TRME-RELATED GTP-BINDING PROTEIN"/>
    <property type="match status" value="1"/>
</dbReference>
<dbReference type="Pfam" id="PF01926">
    <property type="entry name" value="MMR_HSR1"/>
    <property type="match status" value="1"/>
</dbReference>
<dbReference type="PRINTS" id="PR00449">
    <property type="entry name" value="RASTRNSFRMNG"/>
</dbReference>
<dbReference type="SUPFAM" id="SSF52540">
    <property type="entry name" value="P-loop containing nucleoside triphosphate hydrolases"/>
    <property type="match status" value="1"/>
</dbReference>
<dbReference type="PROSITE" id="PS51706">
    <property type="entry name" value="G_ENGB"/>
    <property type="match status" value="1"/>
</dbReference>
<sequence length="216" mass="25051">MKLSTADSIFFFLPYEFINPIILLIPMATIIFAGRSNVGKSTLIYRLTGKKVRRGKRPGVTRKIIEIEWKNHKIIDMPGFGFMMGLPKEVQERIKDEIVHFIEDNAKNIDVAVLVVDGKAAPEIIKRWEKRGEIPIDVEFYQFLRELDIPTIVAVNKLDKIKNVQEVINFLAEKFEVPLSEIDKVFIPISAKFGDNIERLKNRIFEVIRERQGRRV</sequence>
<protein>
    <recommendedName>
        <fullName evidence="1">Probable GTP-binding protein EngB</fullName>
    </recommendedName>
</protein>
<accession>O57939</accession>
<feature type="chain" id="PRO_0000157814" description="Probable GTP-binding protein EngB">
    <location>
        <begin position="1"/>
        <end position="216"/>
    </location>
</feature>
<feature type="domain" description="EngB-type G" evidence="1">
    <location>
        <begin position="26"/>
        <end position="210"/>
    </location>
</feature>
<feature type="binding site" evidence="1">
    <location>
        <begin position="34"/>
        <end position="41"/>
    </location>
    <ligand>
        <name>GTP</name>
        <dbReference type="ChEBI" id="CHEBI:37565"/>
    </ligand>
</feature>
<feature type="binding site" evidence="1">
    <location>
        <position position="41"/>
    </location>
    <ligand>
        <name>Mg(2+)</name>
        <dbReference type="ChEBI" id="CHEBI:18420"/>
    </ligand>
</feature>
<feature type="binding site" evidence="1">
    <location>
        <begin position="59"/>
        <end position="63"/>
    </location>
    <ligand>
        <name>GTP</name>
        <dbReference type="ChEBI" id="CHEBI:37565"/>
    </ligand>
</feature>
<feature type="binding site" evidence="1">
    <location>
        <position position="61"/>
    </location>
    <ligand>
        <name>Mg(2+)</name>
        <dbReference type="ChEBI" id="CHEBI:18420"/>
    </ligand>
</feature>
<feature type="binding site" evidence="1">
    <location>
        <begin position="76"/>
        <end position="79"/>
    </location>
    <ligand>
        <name>GTP</name>
        <dbReference type="ChEBI" id="CHEBI:37565"/>
    </ligand>
</feature>
<feature type="binding site" evidence="1">
    <location>
        <begin position="156"/>
        <end position="159"/>
    </location>
    <ligand>
        <name>GTP</name>
        <dbReference type="ChEBI" id="CHEBI:37565"/>
    </ligand>
</feature>
<feature type="binding site" evidence="1">
    <location>
        <begin position="189"/>
        <end position="191"/>
    </location>
    <ligand>
        <name>GTP</name>
        <dbReference type="ChEBI" id="CHEBI:37565"/>
    </ligand>
</feature>
<feature type="strand" evidence="3">
    <location>
        <begin position="29"/>
        <end position="35"/>
    </location>
</feature>
<feature type="helix" evidence="3">
    <location>
        <begin position="40"/>
        <end position="48"/>
    </location>
</feature>
<feature type="strand" evidence="3">
    <location>
        <begin position="53"/>
        <end position="57"/>
    </location>
</feature>
<feature type="strand" evidence="3">
    <location>
        <begin position="65"/>
        <end position="69"/>
    </location>
</feature>
<feature type="strand" evidence="3">
    <location>
        <begin position="72"/>
        <end position="76"/>
    </location>
</feature>
<feature type="helix" evidence="3">
    <location>
        <begin position="88"/>
        <end position="105"/>
    </location>
</feature>
<feature type="helix" evidence="3">
    <location>
        <begin position="106"/>
        <end position="108"/>
    </location>
</feature>
<feature type="strand" evidence="3">
    <location>
        <begin position="111"/>
        <end position="117"/>
    </location>
</feature>
<feature type="helix" evidence="3">
    <location>
        <begin position="120"/>
        <end position="130"/>
    </location>
</feature>
<feature type="helix" evidence="3">
    <location>
        <begin position="136"/>
        <end position="146"/>
    </location>
</feature>
<feature type="strand" evidence="3">
    <location>
        <begin position="151"/>
        <end position="156"/>
    </location>
</feature>
<feature type="helix" evidence="3">
    <location>
        <begin position="158"/>
        <end position="160"/>
    </location>
</feature>
<feature type="helix" evidence="3">
    <location>
        <begin position="164"/>
        <end position="175"/>
    </location>
</feature>
<feature type="helix" evidence="3">
    <location>
        <begin position="179"/>
        <end position="181"/>
    </location>
</feature>
<feature type="helix" evidence="3">
    <location>
        <begin position="182"/>
        <end position="185"/>
    </location>
</feature>
<feature type="strand" evidence="3">
    <location>
        <begin position="186"/>
        <end position="188"/>
    </location>
</feature>
<feature type="turn" evidence="3">
    <location>
        <begin position="191"/>
        <end position="193"/>
    </location>
</feature>
<feature type="helix" evidence="3">
    <location>
        <begin position="197"/>
        <end position="210"/>
    </location>
</feature>
<gene>
    <name evidence="1" type="primary">engB</name>
    <name type="ordered locus">PH0200</name>
</gene>
<evidence type="ECO:0000255" key="1">
    <source>
        <dbReference type="HAMAP-Rule" id="MF_00321"/>
    </source>
</evidence>
<evidence type="ECO:0000305" key="2"/>
<evidence type="ECO:0007829" key="3">
    <source>
        <dbReference type="PDB" id="2CXX"/>
    </source>
</evidence>
<proteinExistence type="evidence at protein level"/>
<organism>
    <name type="scientific">Pyrococcus horikoshii (strain ATCC 700860 / DSM 12428 / JCM 9974 / NBRC 100139 / OT-3)</name>
    <dbReference type="NCBI Taxonomy" id="70601"/>
    <lineage>
        <taxon>Archaea</taxon>
        <taxon>Methanobacteriati</taxon>
        <taxon>Methanobacteriota</taxon>
        <taxon>Thermococci</taxon>
        <taxon>Thermococcales</taxon>
        <taxon>Thermococcaceae</taxon>
        <taxon>Pyrococcus</taxon>
    </lineage>
</organism>
<comment type="function">
    <text evidence="1">Necessary for normal cell division and for the maintenance of normal septation.</text>
</comment>
<comment type="cofactor">
    <cofactor evidence="1">
        <name>Mg(2+)</name>
        <dbReference type="ChEBI" id="CHEBI:18420"/>
    </cofactor>
</comment>
<comment type="similarity">
    <text evidence="1">Belongs to the TRAFAC class TrmE-Era-EngA-EngB-Septin-like GTPase superfamily. EngB GTPase family.</text>
</comment>
<comment type="sequence caution" evidence="2">
    <conflict type="frameshift">
        <sequence resource="EMBL-CDS" id="BAA29269"/>
    </conflict>
</comment>
<reference key="1">
    <citation type="journal article" date="1998" name="DNA Res.">
        <title>Complete sequence and gene organization of the genome of a hyper-thermophilic archaebacterium, Pyrococcus horikoshii OT3.</title>
        <authorList>
            <person name="Kawarabayasi Y."/>
            <person name="Sawada M."/>
            <person name="Horikawa H."/>
            <person name="Haikawa Y."/>
            <person name="Hino Y."/>
            <person name="Yamamoto S."/>
            <person name="Sekine M."/>
            <person name="Baba S."/>
            <person name="Kosugi H."/>
            <person name="Hosoyama A."/>
            <person name="Nagai Y."/>
            <person name="Sakai M."/>
            <person name="Ogura K."/>
            <person name="Otsuka R."/>
            <person name="Nakazawa H."/>
            <person name="Takamiya M."/>
            <person name="Ohfuku Y."/>
            <person name="Funahashi T."/>
            <person name="Tanaka T."/>
            <person name="Kudoh Y."/>
            <person name="Yamazaki J."/>
            <person name="Kushida N."/>
            <person name="Oguchi A."/>
            <person name="Aoki K."/>
            <person name="Yoshizawa T."/>
            <person name="Nakamura Y."/>
            <person name="Robb F.T."/>
            <person name="Horikoshi K."/>
            <person name="Masuchi Y."/>
            <person name="Shizuya H."/>
            <person name="Kikuchi H."/>
        </authorList>
    </citation>
    <scope>NUCLEOTIDE SEQUENCE [LARGE SCALE GENOMIC DNA]</scope>
    <source>
        <strain>ATCC 700860 / DSM 12428 / JCM 9974 / NBRC 100139 / OT-3</strain>
    </source>
</reference>